<proteinExistence type="inferred from homology"/>
<gene>
    <name evidence="1" type="primary">rpsS</name>
    <name type="ordered locus">Shew185_0200</name>
</gene>
<organism>
    <name type="scientific">Shewanella baltica (strain OS185)</name>
    <dbReference type="NCBI Taxonomy" id="402882"/>
    <lineage>
        <taxon>Bacteria</taxon>
        <taxon>Pseudomonadati</taxon>
        <taxon>Pseudomonadota</taxon>
        <taxon>Gammaproteobacteria</taxon>
        <taxon>Alteromonadales</taxon>
        <taxon>Shewanellaceae</taxon>
        <taxon>Shewanella</taxon>
    </lineage>
</organism>
<protein>
    <recommendedName>
        <fullName evidence="1">Small ribosomal subunit protein uS19</fullName>
    </recommendedName>
    <alternativeName>
        <fullName evidence="2">30S ribosomal protein S19</fullName>
    </alternativeName>
</protein>
<keyword id="KW-0687">Ribonucleoprotein</keyword>
<keyword id="KW-0689">Ribosomal protein</keyword>
<keyword id="KW-0694">RNA-binding</keyword>
<keyword id="KW-0699">rRNA-binding</keyword>
<accession>A6WHT2</accession>
<reference key="1">
    <citation type="submission" date="2007-07" db="EMBL/GenBank/DDBJ databases">
        <title>Complete sequence of chromosome of Shewanella baltica OS185.</title>
        <authorList>
            <consortium name="US DOE Joint Genome Institute"/>
            <person name="Copeland A."/>
            <person name="Lucas S."/>
            <person name="Lapidus A."/>
            <person name="Barry K."/>
            <person name="Glavina del Rio T."/>
            <person name="Dalin E."/>
            <person name="Tice H."/>
            <person name="Pitluck S."/>
            <person name="Sims D."/>
            <person name="Brettin T."/>
            <person name="Bruce D."/>
            <person name="Detter J.C."/>
            <person name="Han C."/>
            <person name="Schmutz J."/>
            <person name="Larimer F."/>
            <person name="Land M."/>
            <person name="Hauser L."/>
            <person name="Kyrpides N."/>
            <person name="Mikhailova N."/>
            <person name="Brettar I."/>
            <person name="Rodrigues J."/>
            <person name="Konstantinidis K."/>
            <person name="Tiedje J."/>
            <person name="Richardson P."/>
        </authorList>
    </citation>
    <scope>NUCLEOTIDE SEQUENCE [LARGE SCALE GENOMIC DNA]</scope>
    <source>
        <strain>OS185</strain>
    </source>
</reference>
<dbReference type="EMBL" id="CP000753">
    <property type="protein sequence ID" value="ABS06371.1"/>
    <property type="molecule type" value="Genomic_DNA"/>
</dbReference>
<dbReference type="RefSeq" id="WP_006083596.1">
    <property type="nucleotide sequence ID" value="NC_009665.1"/>
</dbReference>
<dbReference type="SMR" id="A6WHT2"/>
<dbReference type="GeneID" id="94726190"/>
<dbReference type="KEGG" id="sbm:Shew185_0200"/>
<dbReference type="HOGENOM" id="CLU_144911_0_1_6"/>
<dbReference type="GO" id="GO:0005737">
    <property type="term" value="C:cytoplasm"/>
    <property type="evidence" value="ECO:0007669"/>
    <property type="project" value="UniProtKB-ARBA"/>
</dbReference>
<dbReference type="GO" id="GO:0015935">
    <property type="term" value="C:small ribosomal subunit"/>
    <property type="evidence" value="ECO:0007669"/>
    <property type="project" value="InterPro"/>
</dbReference>
<dbReference type="GO" id="GO:0019843">
    <property type="term" value="F:rRNA binding"/>
    <property type="evidence" value="ECO:0007669"/>
    <property type="project" value="UniProtKB-UniRule"/>
</dbReference>
<dbReference type="GO" id="GO:0003735">
    <property type="term" value="F:structural constituent of ribosome"/>
    <property type="evidence" value="ECO:0007669"/>
    <property type="project" value="InterPro"/>
</dbReference>
<dbReference type="GO" id="GO:0000028">
    <property type="term" value="P:ribosomal small subunit assembly"/>
    <property type="evidence" value="ECO:0007669"/>
    <property type="project" value="TreeGrafter"/>
</dbReference>
<dbReference type="GO" id="GO:0006412">
    <property type="term" value="P:translation"/>
    <property type="evidence" value="ECO:0007669"/>
    <property type="project" value="UniProtKB-UniRule"/>
</dbReference>
<dbReference type="FunFam" id="3.30.860.10:FF:000001">
    <property type="entry name" value="30S ribosomal protein S19"/>
    <property type="match status" value="1"/>
</dbReference>
<dbReference type="Gene3D" id="3.30.860.10">
    <property type="entry name" value="30s Ribosomal Protein S19, Chain A"/>
    <property type="match status" value="1"/>
</dbReference>
<dbReference type="HAMAP" id="MF_00531">
    <property type="entry name" value="Ribosomal_uS19"/>
    <property type="match status" value="1"/>
</dbReference>
<dbReference type="InterPro" id="IPR002222">
    <property type="entry name" value="Ribosomal_uS19"/>
</dbReference>
<dbReference type="InterPro" id="IPR005732">
    <property type="entry name" value="Ribosomal_uS19_bac-type"/>
</dbReference>
<dbReference type="InterPro" id="IPR020934">
    <property type="entry name" value="Ribosomal_uS19_CS"/>
</dbReference>
<dbReference type="InterPro" id="IPR023575">
    <property type="entry name" value="Ribosomal_uS19_SF"/>
</dbReference>
<dbReference type="NCBIfam" id="TIGR01050">
    <property type="entry name" value="rpsS_bact"/>
    <property type="match status" value="1"/>
</dbReference>
<dbReference type="PANTHER" id="PTHR11880">
    <property type="entry name" value="RIBOSOMAL PROTEIN S19P FAMILY MEMBER"/>
    <property type="match status" value="1"/>
</dbReference>
<dbReference type="PANTHER" id="PTHR11880:SF8">
    <property type="entry name" value="SMALL RIBOSOMAL SUBUNIT PROTEIN US19M"/>
    <property type="match status" value="1"/>
</dbReference>
<dbReference type="Pfam" id="PF00203">
    <property type="entry name" value="Ribosomal_S19"/>
    <property type="match status" value="1"/>
</dbReference>
<dbReference type="PIRSF" id="PIRSF002144">
    <property type="entry name" value="Ribosomal_S19"/>
    <property type="match status" value="1"/>
</dbReference>
<dbReference type="PRINTS" id="PR00975">
    <property type="entry name" value="RIBOSOMALS19"/>
</dbReference>
<dbReference type="SUPFAM" id="SSF54570">
    <property type="entry name" value="Ribosomal protein S19"/>
    <property type="match status" value="1"/>
</dbReference>
<dbReference type="PROSITE" id="PS00323">
    <property type="entry name" value="RIBOSOMAL_S19"/>
    <property type="match status" value="1"/>
</dbReference>
<evidence type="ECO:0000255" key="1">
    <source>
        <dbReference type="HAMAP-Rule" id="MF_00531"/>
    </source>
</evidence>
<evidence type="ECO:0000305" key="2"/>
<sequence>MPRSLKKGPFIDLHLLKKVEKAMEAGDKKPIKTWSRRSMIIPNMIGLTIAVHNGRQHVPVFVTDEMIGHKLGEFSPTRTYRGHAADKKAKKR</sequence>
<name>RS19_SHEB8</name>
<feature type="chain" id="PRO_1000051122" description="Small ribosomal subunit protein uS19">
    <location>
        <begin position="1"/>
        <end position="92"/>
    </location>
</feature>
<comment type="function">
    <text evidence="1">Protein S19 forms a complex with S13 that binds strongly to the 16S ribosomal RNA.</text>
</comment>
<comment type="similarity">
    <text evidence="1">Belongs to the universal ribosomal protein uS19 family.</text>
</comment>